<proteinExistence type="evidence at protein level"/>
<keyword id="KW-0002">3D-structure</keyword>
<keyword id="KW-0137">Centromere</keyword>
<keyword id="KW-0156">Chromatin regulator</keyword>
<keyword id="KW-0158">Chromosome</keyword>
<keyword id="KW-0963">Cytoplasm</keyword>
<keyword id="KW-0995">Kinetochore</keyword>
<keyword id="KW-0539">Nucleus</keyword>
<keyword id="KW-0597">Phosphoprotein</keyword>
<keyword id="KW-1185">Reference proteome</keyword>
<keyword id="KW-0677">Repeat</keyword>
<keyword id="KW-0853">WD repeat</keyword>
<organism>
    <name type="scientific">Schizosaccharomyces pombe (strain 972 / ATCC 24843)</name>
    <name type="common">Fission yeast</name>
    <dbReference type="NCBI Taxonomy" id="284812"/>
    <lineage>
        <taxon>Eukaryota</taxon>
        <taxon>Fungi</taxon>
        <taxon>Dikarya</taxon>
        <taxon>Ascomycota</taxon>
        <taxon>Taphrinomycotina</taxon>
        <taxon>Schizosaccharomycetes</taxon>
        <taxon>Schizosaccharomycetales</taxon>
        <taxon>Schizosaccharomycetaceae</taxon>
        <taxon>Schizosaccharomyces</taxon>
    </lineage>
</organism>
<name>HAT2_SCHPO</name>
<gene>
    <name type="primary">mis16</name>
    <name type="synonym">hat2</name>
    <name type="ORF">SPCC1672.10</name>
</gene>
<evidence type="ECO:0000250" key="1">
    <source>
        <dbReference type="UniProtKB" id="P39984"/>
    </source>
</evidence>
<evidence type="ECO:0000269" key="2">
    <source>
    </source>
</evidence>
<evidence type="ECO:0000269" key="3">
    <source>
    </source>
</evidence>
<evidence type="ECO:0000269" key="4">
    <source>
    </source>
</evidence>
<evidence type="ECO:0000269" key="5">
    <source>
    </source>
</evidence>
<evidence type="ECO:0000269" key="6">
    <source>
    </source>
</evidence>
<evidence type="ECO:0000305" key="7"/>
<evidence type="ECO:0007829" key="8">
    <source>
        <dbReference type="PDB" id="6S1L"/>
    </source>
</evidence>
<evidence type="ECO:0007829" key="9">
    <source>
        <dbReference type="PDB" id="6S1R"/>
    </source>
</evidence>
<evidence type="ECO:0007829" key="10">
    <source>
        <dbReference type="PDB" id="6S29"/>
    </source>
</evidence>
<feature type="chain" id="PRO_0000227743" description="Histone acetyltransferase type B subunit 2">
    <location>
        <begin position="1"/>
        <end position="430"/>
    </location>
</feature>
<feature type="repeat" description="WD 1">
    <location>
        <begin position="129"/>
        <end position="169"/>
    </location>
</feature>
<feature type="repeat" description="WD 2">
    <location>
        <begin position="180"/>
        <end position="220"/>
    </location>
</feature>
<feature type="repeat" description="WD 3">
    <location>
        <begin position="233"/>
        <end position="273"/>
    </location>
</feature>
<feature type="repeat" description="WD 4">
    <location>
        <begin position="279"/>
        <end position="319"/>
    </location>
</feature>
<feature type="repeat" description="WD 5">
    <location>
        <begin position="323"/>
        <end position="363"/>
    </location>
</feature>
<feature type="repeat" description="WD 6">
    <location>
        <begin position="380"/>
        <end position="420"/>
    </location>
</feature>
<feature type="region of interest" description="Interaction with the histone H4 N-terminus" evidence="1">
    <location>
        <begin position="365"/>
        <end position="369"/>
    </location>
</feature>
<feature type="site" description="Important for interaction with HAT1" evidence="1">
    <location>
        <position position="296"/>
    </location>
</feature>
<feature type="modified residue" description="Phosphoserine" evidence="3">
    <location>
        <position position="425"/>
    </location>
</feature>
<feature type="helix" evidence="9">
    <location>
        <begin position="13"/>
        <end position="40"/>
    </location>
</feature>
<feature type="strand" evidence="9">
    <location>
        <begin position="41"/>
        <end position="48"/>
    </location>
</feature>
<feature type="strand" evidence="9">
    <location>
        <begin position="56"/>
        <end position="64"/>
    </location>
</feature>
<feature type="strand" evidence="9">
    <location>
        <begin position="68"/>
        <end position="77"/>
    </location>
</feature>
<feature type="strand" evidence="9">
    <location>
        <begin position="83"/>
        <end position="85"/>
    </location>
</feature>
<feature type="strand" evidence="9">
    <location>
        <begin position="87"/>
        <end position="97"/>
    </location>
</feature>
<feature type="turn" evidence="10">
    <location>
        <begin position="101"/>
        <end position="103"/>
    </location>
</feature>
<feature type="strand" evidence="9">
    <location>
        <begin position="122"/>
        <end position="132"/>
    </location>
</feature>
<feature type="strand" evidence="9">
    <location>
        <begin position="136"/>
        <end position="140"/>
    </location>
</feature>
<feature type="strand" evidence="9">
    <location>
        <begin position="143"/>
        <end position="150"/>
    </location>
</feature>
<feature type="helix" evidence="9">
    <location>
        <begin position="152"/>
        <end position="154"/>
    </location>
</feature>
<feature type="strand" evidence="9">
    <location>
        <begin position="156"/>
        <end position="160"/>
    </location>
</feature>
<feature type="helix" evidence="8">
    <location>
        <begin position="161"/>
        <end position="163"/>
    </location>
</feature>
<feature type="strand" evidence="9">
    <location>
        <begin position="166"/>
        <end position="170"/>
    </location>
</feature>
<feature type="strand" evidence="9">
    <location>
        <begin position="175"/>
        <end position="178"/>
    </location>
</feature>
<feature type="strand" evidence="9">
    <location>
        <begin position="185"/>
        <end position="190"/>
    </location>
</feature>
<feature type="strand" evidence="9">
    <location>
        <begin position="197"/>
        <end position="202"/>
    </location>
</feature>
<feature type="strand" evidence="9">
    <location>
        <begin position="207"/>
        <end position="211"/>
    </location>
</feature>
<feature type="helix" evidence="9">
    <location>
        <begin position="214"/>
        <end position="216"/>
    </location>
</feature>
<feature type="strand" evidence="9">
    <location>
        <begin position="219"/>
        <end position="221"/>
    </location>
</feature>
<feature type="strand" evidence="9">
    <location>
        <begin position="223"/>
        <end position="225"/>
    </location>
</feature>
<feature type="strand" evidence="9">
    <location>
        <begin position="228"/>
        <end position="231"/>
    </location>
</feature>
<feature type="strand" evidence="9">
    <location>
        <begin position="238"/>
        <end position="243"/>
    </location>
</feature>
<feature type="strand" evidence="9">
    <location>
        <begin position="250"/>
        <end position="255"/>
    </location>
</feature>
<feature type="strand" evidence="9">
    <location>
        <begin position="260"/>
        <end position="264"/>
    </location>
</feature>
<feature type="strand" evidence="9">
    <location>
        <begin position="275"/>
        <end position="277"/>
    </location>
</feature>
<feature type="strand" evidence="9">
    <location>
        <begin position="284"/>
        <end position="289"/>
    </location>
</feature>
<feature type="strand" evidence="8">
    <location>
        <begin position="291"/>
        <end position="293"/>
    </location>
</feature>
<feature type="strand" evidence="9">
    <location>
        <begin position="294"/>
        <end position="301"/>
    </location>
</feature>
<feature type="strand" evidence="9">
    <location>
        <begin position="306"/>
        <end position="310"/>
    </location>
</feature>
<feature type="strand" evidence="9">
    <location>
        <begin position="316"/>
        <end position="321"/>
    </location>
</feature>
<feature type="strand" evidence="9">
    <location>
        <begin position="328"/>
        <end position="333"/>
    </location>
</feature>
<feature type="strand" evidence="9">
    <location>
        <begin position="340"/>
        <end position="345"/>
    </location>
</feature>
<feature type="strand" evidence="9">
    <location>
        <begin position="350"/>
        <end position="354"/>
    </location>
</feature>
<feature type="helix" evidence="9">
    <location>
        <begin position="355"/>
        <end position="357"/>
    </location>
</feature>
<feature type="helix" evidence="9">
    <location>
        <begin position="364"/>
        <end position="369"/>
    </location>
</feature>
<feature type="strand" evidence="9">
    <location>
        <begin position="374"/>
        <end position="378"/>
    </location>
</feature>
<feature type="strand" evidence="9">
    <location>
        <begin position="385"/>
        <end position="390"/>
    </location>
</feature>
<feature type="strand" evidence="10">
    <location>
        <begin position="394"/>
        <end position="396"/>
    </location>
</feature>
<feature type="strand" evidence="9">
    <location>
        <begin position="398"/>
        <end position="402"/>
    </location>
</feature>
<feature type="strand" evidence="9">
    <location>
        <begin position="405"/>
        <end position="412"/>
    </location>
</feature>
<feature type="helix" evidence="9">
    <location>
        <begin position="414"/>
        <end position="417"/>
    </location>
</feature>
<feature type="turn" evidence="8">
    <location>
        <begin position="418"/>
        <end position="420"/>
    </location>
</feature>
<protein>
    <recommendedName>
        <fullName>Histone acetyltransferase type B subunit 2</fullName>
    </recommendedName>
    <alternativeName>
        <fullName>Kinetochore protein mis16</fullName>
    </alternativeName>
</protein>
<sequence length="430" mass="48435">MSEEVVQDAPLENNELNAEIDLQKTIQEEYKLWKQNVPFLYDLVITHALEWPSLTIQWLPDKKTIPGTDYSIQRLILGTHTSGNDQNYLQIASVQLPNFDEDTTEFTPSTIRRAQATGSYTIEISQKIPHDGDVNRARYMPQKPEIIATMGEGGNAYIFDTTCHDALTTGEALPQAVLKGHTAEGFGLCWNPNLPGNLATGAEDQVICLWDVQTQSFTSSETKVISPIAKYHRHTDIVNDVQFHPQHEALLASVSDDCTLQIHDTRLNPEEEAPKVIQAHSKAINAVAINPFNDYLLATASADKTVALWDLRNPYQRLHTLEGHEDEVYGLEWSPHDEPILASSSTDRRVCIWDLEKIGEEQTPEDAEDGSPELLFMHGGHTNRISEFSWCPNERWVVGSLADDNILQIWSPSRVIWGRDHVQVSPRDLE</sequence>
<dbReference type="EMBL" id="CU329672">
    <property type="protein sequence ID" value="CAA20448.1"/>
    <property type="molecule type" value="Genomic_DNA"/>
</dbReference>
<dbReference type="PIR" id="T41054">
    <property type="entry name" value="T41054"/>
</dbReference>
<dbReference type="RefSeq" id="NP_587881.1">
    <property type="nucleotide sequence ID" value="NM_001022873.2"/>
</dbReference>
<dbReference type="PDB" id="5WJC">
    <property type="method" value="X-ray"/>
    <property type="resolution" value="2.30 A"/>
    <property type="chains" value="A=1-430"/>
</dbReference>
<dbReference type="PDB" id="6S1L">
    <property type="method" value="X-ray"/>
    <property type="resolution" value="1.94 A"/>
    <property type="chains" value="A=2-430"/>
</dbReference>
<dbReference type="PDB" id="6S1R">
    <property type="method" value="X-ray"/>
    <property type="resolution" value="1.80 A"/>
    <property type="chains" value="A=2-430"/>
</dbReference>
<dbReference type="PDB" id="6S29">
    <property type="method" value="X-ray"/>
    <property type="resolution" value="1.99 A"/>
    <property type="chains" value="A/C=2-430"/>
</dbReference>
<dbReference type="PDBsum" id="5WJC"/>
<dbReference type="PDBsum" id="6S1L"/>
<dbReference type="PDBsum" id="6S1R"/>
<dbReference type="PDBsum" id="6S29"/>
<dbReference type="SMR" id="O94244"/>
<dbReference type="BioGRID" id="275784">
    <property type="interactions" value="14"/>
</dbReference>
<dbReference type="FunCoup" id="O94244">
    <property type="interactions" value="944"/>
</dbReference>
<dbReference type="IntAct" id="O94244">
    <property type="interactions" value="2"/>
</dbReference>
<dbReference type="STRING" id="284812.O94244"/>
<dbReference type="iPTMnet" id="O94244"/>
<dbReference type="SwissPalm" id="O94244"/>
<dbReference type="PaxDb" id="4896-SPCC1672.10.1"/>
<dbReference type="EnsemblFungi" id="SPCC1672.10.1">
    <property type="protein sequence ID" value="SPCC1672.10.1:pep"/>
    <property type="gene ID" value="SPCC1672.10"/>
</dbReference>
<dbReference type="GeneID" id="2539214"/>
<dbReference type="KEGG" id="spo:2539214"/>
<dbReference type="PomBase" id="SPCC1672.10">
    <property type="gene designation" value="mis16"/>
</dbReference>
<dbReference type="VEuPathDB" id="FungiDB:SPCC1672.10"/>
<dbReference type="eggNOG" id="KOG0264">
    <property type="taxonomic scope" value="Eukaryota"/>
</dbReference>
<dbReference type="HOGENOM" id="CLU_020445_3_1_1"/>
<dbReference type="InParanoid" id="O94244"/>
<dbReference type="OMA" id="PHEEGCL"/>
<dbReference type="PhylomeDB" id="O94244"/>
<dbReference type="Reactome" id="R-SPO-3214815">
    <property type="pathway name" value="HDACs deacetylate histones"/>
</dbReference>
<dbReference type="Reactome" id="R-SPO-3214847">
    <property type="pathway name" value="HATs acetylate histones"/>
</dbReference>
<dbReference type="Reactome" id="R-SPO-3214858">
    <property type="pathway name" value="RMTs methylate histone arginines"/>
</dbReference>
<dbReference type="Reactome" id="R-SPO-8951664">
    <property type="pathway name" value="Neddylation"/>
</dbReference>
<dbReference type="PRO" id="PR:O94244"/>
<dbReference type="Proteomes" id="UP000002485">
    <property type="component" value="Chromosome III"/>
</dbReference>
<dbReference type="GO" id="GO:0098654">
    <property type="term" value="C:CENP-A recruiting complex"/>
    <property type="evidence" value="ECO:0000314"/>
    <property type="project" value="PomBase"/>
</dbReference>
<dbReference type="GO" id="GO:0000775">
    <property type="term" value="C:chromosome, centromeric region"/>
    <property type="evidence" value="ECO:0000314"/>
    <property type="project" value="PomBase"/>
</dbReference>
<dbReference type="GO" id="GO:0005737">
    <property type="term" value="C:cytoplasm"/>
    <property type="evidence" value="ECO:0000318"/>
    <property type="project" value="GO_Central"/>
</dbReference>
<dbReference type="GO" id="GO:0000776">
    <property type="term" value="C:kinetochore"/>
    <property type="evidence" value="ECO:0000314"/>
    <property type="project" value="PomBase"/>
</dbReference>
<dbReference type="GO" id="GO:0005634">
    <property type="term" value="C:nucleus"/>
    <property type="evidence" value="ECO:0007005"/>
    <property type="project" value="PomBase"/>
</dbReference>
<dbReference type="GO" id="GO:0000510">
    <property type="term" value="F:H3-H4 histone complex chaperone activity"/>
    <property type="evidence" value="ECO:0000269"/>
    <property type="project" value="PomBase"/>
</dbReference>
<dbReference type="GO" id="GO:0042393">
    <property type="term" value="F:histone binding"/>
    <property type="evidence" value="ECO:0000318"/>
    <property type="project" value="GO_Central"/>
</dbReference>
<dbReference type="GO" id="GO:0034080">
    <property type="term" value="P:CENP-A containing chromatin assembly"/>
    <property type="evidence" value="ECO:0000315"/>
    <property type="project" value="PomBase"/>
</dbReference>
<dbReference type="GO" id="GO:0006338">
    <property type="term" value="P:chromatin remodeling"/>
    <property type="evidence" value="ECO:0000318"/>
    <property type="project" value="GO_Central"/>
</dbReference>
<dbReference type="CDD" id="cd00200">
    <property type="entry name" value="WD40"/>
    <property type="match status" value="1"/>
</dbReference>
<dbReference type="FunFam" id="2.130.10.10:FF:000512">
    <property type="entry name" value="WD-40 repeat-containing protein MSI1"/>
    <property type="match status" value="1"/>
</dbReference>
<dbReference type="Gene3D" id="2.130.10.10">
    <property type="entry name" value="YVTN repeat-like/Quinoprotein amine dehydrogenase"/>
    <property type="match status" value="1"/>
</dbReference>
<dbReference type="InterPro" id="IPR020472">
    <property type="entry name" value="G-protein_beta_WD-40_rep"/>
</dbReference>
<dbReference type="InterPro" id="IPR022052">
    <property type="entry name" value="Histone-bd_RBBP4-like_N"/>
</dbReference>
<dbReference type="InterPro" id="IPR015943">
    <property type="entry name" value="WD40/YVTN_repeat-like_dom_sf"/>
</dbReference>
<dbReference type="InterPro" id="IPR019775">
    <property type="entry name" value="WD40_repeat_CS"/>
</dbReference>
<dbReference type="InterPro" id="IPR036322">
    <property type="entry name" value="WD40_repeat_dom_sf"/>
</dbReference>
<dbReference type="InterPro" id="IPR001680">
    <property type="entry name" value="WD40_rpt"/>
</dbReference>
<dbReference type="InterPro" id="IPR050459">
    <property type="entry name" value="WD_repeat_RBAP46/RBAP48/MSI1"/>
</dbReference>
<dbReference type="PANTHER" id="PTHR22850">
    <property type="entry name" value="WD40 REPEAT FAMILY"/>
    <property type="match status" value="1"/>
</dbReference>
<dbReference type="Pfam" id="PF23609">
    <property type="entry name" value="Beta-prop_EIPR1"/>
    <property type="match status" value="1"/>
</dbReference>
<dbReference type="Pfam" id="PF12265">
    <property type="entry name" value="CAF1C_H4-bd"/>
    <property type="match status" value="1"/>
</dbReference>
<dbReference type="Pfam" id="PF00400">
    <property type="entry name" value="WD40"/>
    <property type="match status" value="2"/>
</dbReference>
<dbReference type="PRINTS" id="PR00320">
    <property type="entry name" value="GPROTEINBRPT"/>
</dbReference>
<dbReference type="SMART" id="SM00320">
    <property type="entry name" value="WD40"/>
    <property type="match status" value="6"/>
</dbReference>
<dbReference type="SUPFAM" id="SSF50978">
    <property type="entry name" value="WD40 repeat-like"/>
    <property type="match status" value="1"/>
</dbReference>
<dbReference type="PROSITE" id="PS00678">
    <property type="entry name" value="WD_REPEATS_1"/>
    <property type="match status" value="3"/>
</dbReference>
<dbReference type="PROSITE" id="PS50082">
    <property type="entry name" value="WD_REPEATS_2"/>
    <property type="match status" value="3"/>
</dbReference>
<dbReference type="PROSITE" id="PS50294">
    <property type="entry name" value="WD_REPEATS_REGION"/>
    <property type="match status" value="1"/>
</dbReference>
<reference key="1">
    <citation type="journal article" date="2002" name="Nature">
        <title>The genome sequence of Schizosaccharomyces pombe.</title>
        <authorList>
            <person name="Wood V."/>
            <person name="Gwilliam R."/>
            <person name="Rajandream M.A."/>
            <person name="Lyne M.H."/>
            <person name="Lyne R."/>
            <person name="Stewart A."/>
            <person name="Sgouros J.G."/>
            <person name="Peat N."/>
            <person name="Hayles J."/>
            <person name="Baker S.G."/>
            <person name="Basham D."/>
            <person name="Bowman S."/>
            <person name="Brooks K."/>
            <person name="Brown D."/>
            <person name="Brown S."/>
            <person name="Chillingworth T."/>
            <person name="Churcher C.M."/>
            <person name="Collins M."/>
            <person name="Connor R."/>
            <person name="Cronin A."/>
            <person name="Davis P."/>
            <person name="Feltwell T."/>
            <person name="Fraser A."/>
            <person name="Gentles S."/>
            <person name="Goble A."/>
            <person name="Hamlin N."/>
            <person name="Harris D.E."/>
            <person name="Hidalgo J."/>
            <person name="Hodgson G."/>
            <person name="Holroyd S."/>
            <person name="Hornsby T."/>
            <person name="Howarth S."/>
            <person name="Huckle E.J."/>
            <person name="Hunt S."/>
            <person name="Jagels K."/>
            <person name="James K.D."/>
            <person name="Jones L."/>
            <person name="Jones M."/>
            <person name="Leather S."/>
            <person name="McDonald S."/>
            <person name="McLean J."/>
            <person name="Mooney P."/>
            <person name="Moule S."/>
            <person name="Mungall K.L."/>
            <person name="Murphy L.D."/>
            <person name="Niblett D."/>
            <person name="Odell C."/>
            <person name="Oliver K."/>
            <person name="O'Neil S."/>
            <person name="Pearson D."/>
            <person name="Quail M.A."/>
            <person name="Rabbinowitsch E."/>
            <person name="Rutherford K.M."/>
            <person name="Rutter S."/>
            <person name="Saunders D."/>
            <person name="Seeger K."/>
            <person name="Sharp S."/>
            <person name="Skelton J."/>
            <person name="Simmonds M.N."/>
            <person name="Squares R."/>
            <person name="Squares S."/>
            <person name="Stevens K."/>
            <person name="Taylor K."/>
            <person name="Taylor R.G."/>
            <person name="Tivey A."/>
            <person name="Walsh S.V."/>
            <person name="Warren T."/>
            <person name="Whitehead S."/>
            <person name="Woodward J.R."/>
            <person name="Volckaert G."/>
            <person name="Aert R."/>
            <person name="Robben J."/>
            <person name="Grymonprez B."/>
            <person name="Weltjens I."/>
            <person name="Vanstreels E."/>
            <person name="Rieger M."/>
            <person name="Schaefer M."/>
            <person name="Mueller-Auer S."/>
            <person name="Gabel C."/>
            <person name="Fuchs M."/>
            <person name="Duesterhoeft A."/>
            <person name="Fritzc C."/>
            <person name="Holzer E."/>
            <person name="Moestl D."/>
            <person name="Hilbert H."/>
            <person name="Borzym K."/>
            <person name="Langer I."/>
            <person name="Beck A."/>
            <person name="Lehrach H."/>
            <person name="Reinhardt R."/>
            <person name="Pohl T.M."/>
            <person name="Eger P."/>
            <person name="Zimmermann W."/>
            <person name="Wedler H."/>
            <person name="Wambutt R."/>
            <person name="Purnelle B."/>
            <person name="Goffeau A."/>
            <person name="Cadieu E."/>
            <person name="Dreano S."/>
            <person name="Gloux S."/>
            <person name="Lelaure V."/>
            <person name="Mottier S."/>
            <person name="Galibert F."/>
            <person name="Aves S.J."/>
            <person name="Xiang Z."/>
            <person name="Hunt C."/>
            <person name="Moore K."/>
            <person name="Hurst S.M."/>
            <person name="Lucas M."/>
            <person name="Rochet M."/>
            <person name="Gaillardin C."/>
            <person name="Tallada V.A."/>
            <person name="Garzon A."/>
            <person name="Thode G."/>
            <person name="Daga R.R."/>
            <person name="Cruzado L."/>
            <person name="Jimenez J."/>
            <person name="Sanchez M."/>
            <person name="del Rey F."/>
            <person name="Benito J."/>
            <person name="Dominguez A."/>
            <person name="Revuelta J.L."/>
            <person name="Moreno S."/>
            <person name="Armstrong J."/>
            <person name="Forsburg S.L."/>
            <person name="Cerutti L."/>
            <person name="Lowe T."/>
            <person name="McCombie W.R."/>
            <person name="Paulsen I."/>
            <person name="Potashkin J."/>
            <person name="Shpakovski G.V."/>
            <person name="Ussery D."/>
            <person name="Barrell B.G."/>
            <person name="Nurse P."/>
        </authorList>
    </citation>
    <scope>NUCLEOTIDE SEQUENCE [LARGE SCALE GENOMIC DNA]</scope>
    <source>
        <strain>972 / ATCC 24843</strain>
    </source>
</reference>
<reference key="2">
    <citation type="journal article" date="2004" name="Cell">
        <title>Mis16 and Mis18 are required for CENP-A loading and histone deacetylation at centromeres.</title>
        <authorList>
            <person name="Hayashi T."/>
            <person name="Fujita Y."/>
            <person name="Iwasaki O."/>
            <person name="Adachi Y."/>
            <person name="Takahashi K."/>
            <person name="Yanagida M."/>
        </authorList>
    </citation>
    <scope>FUNCTION</scope>
    <scope>INTERACTION WITH MIS18</scope>
    <scope>SUBCELLULAR LOCATION</scope>
</reference>
<reference key="3">
    <citation type="journal article" date="2006" name="Nat. Biotechnol.">
        <title>ORFeome cloning and global analysis of protein localization in the fission yeast Schizosaccharomyces pombe.</title>
        <authorList>
            <person name="Matsuyama A."/>
            <person name="Arai R."/>
            <person name="Yashiroda Y."/>
            <person name="Shirai A."/>
            <person name="Kamata A."/>
            <person name="Sekido S."/>
            <person name="Kobayashi Y."/>
            <person name="Hashimoto A."/>
            <person name="Hamamoto M."/>
            <person name="Hiraoka Y."/>
            <person name="Horinouchi S."/>
            <person name="Yoshida M."/>
        </authorList>
    </citation>
    <scope>SUBCELLULAR LOCATION [LARGE SCALE ANALYSIS]</scope>
</reference>
<reference key="4">
    <citation type="journal article" date="2008" name="J. Proteome Res.">
        <title>Phosphoproteome analysis of fission yeast.</title>
        <authorList>
            <person name="Wilson-Grady J.T."/>
            <person name="Villen J."/>
            <person name="Gygi S.P."/>
        </authorList>
    </citation>
    <scope>PHOSPHORYLATION [LARGE SCALE ANALYSIS] AT SER-425</scope>
    <scope>IDENTIFICATION BY MASS SPECTROMETRY</scope>
</reference>
<reference key="5">
    <citation type="journal article" date="2014" name="Genes Cells">
        <title>Schizosaccharomyces pombe centromere protein Mis19 links Mis16 and Mis18 to recruit CENP-A through interacting with NMD factors and the SWI/SNF complex.</title>
        <authorList>
            <person name="Hayashi T."/>
            <person name="Ebe M."/>
            <person name="Nagao K."/>
            <person name="Kokubu A."/>
            <person name="Sajiki K."/>
            <person name="Yanagida M."/>
        </authorList>
    </citation>
    <scope>IDENTIFICATION IN THE CENP-A RECRUITING COMPLEX</scope>
    <scope>FUNCTION</scope>
</reference>
<reference key="6">
    <citation type="journal article" date="2014" name="Open Biol.">
        <title>Eic1 links Mis18 with the CCAN/Mis6/Ctf19 complex to promote CENP-A assembly.</title>
        <authorList>
            <person name="Subramanian L."/>
            <person name="Toda N.R."/>
            <person name="Rappsilber J."/>
            <person name="Allshire R.C."/>
        </authorList>
    </citation>
    <scope>IDENTIFICATION IN THE CENP-A RECRUITING COMPLEX</scope>
    <scope>FUNCTION</scope>
</reference>
<reference key="7">
    <citation type="journal article" date="2014" name="PLoS ONE">
        <title>The kinetochore protein Kis1/Eic1/Mis19 ensures the integrity of mitotic spindles through maintenance of kinetochore factors Mis6/CENP-I and CENP-A.</title>
        <authorList>
            <person name="Hirai H."/>
            <person name="Arai K."/>
            <person name="Kariyazono R."/>
            <person name="Yamamoto M."/>
            <person name="Sato M."/>
        </authorList>
    </citation>
    <scope>IDENTIFICATION IN THE CENP-A RECRUITING COMPLEX</scope>
    <scope>FUNCTION</scope>
</reference>
<accession>O94244</accession>
<comment type="function">
    <text evidence="1 2 4 5 6">Regulatory subunit of the histone acetylase B (HAT-B) complex (By similarity). The complex acetylates 'Lys-12' of histone H4 which is required for telomeric silencing (By similarity). Component of the CENP-A recruiting complex that ensures the integrity of mitotic spindles through maintenance of kinetochore factors mis6/CENP-I and cnp1/CENP-A (PubMed:15369671, PubMed:24774534, PubMed:24789708, PubMed:25375240). Maintains the deacetylated state of histones specifically in the central core of the centromeres (PubMed:15369671).</text>
</comment>
<comment type="subunit">
    <text evidence="1 2 4 5 6">Component of the HAT-B complex composed of at least hat1 and hat2. The HAT-B complex binds to histone H4 tail (By similarity). Component of the CENP-A recruiting complex composed of at least mis16, mis19, mis19 and mis20 (PubMed:24774534, PubMed:24789708, PubMed:25375240).</text>
</comment>
<comment type="interaction">
    <interactant intactId="EBI-1148703">
        <id>O94244</id>
    </interactant>
    <interactant intactId="EBI-1148763">
        <id>Q9P802</id>
        <label>mis18</label>
    </interactant>
    <organismsDiffer>false</organismsDiffer>
    <experiments>2</experiments>
</comment>
<comment type="subcellular location">
    <subcellularLocation>
        <location evidence="2">Cytoplasm</location>
    </subcellularLocation>
    <subcellularLocation>
        <location evidence="2">Nucleus</location>
    </subcellularLocation>
    <subcellularLocation>
        <location evidence="2">Chromosome</location>
        <location evidence="2">Centromere</location>
    </subcellularLocation>
    <subcellularLocation>
        <location evidence="2">Chromosome</location>
        <location evidence="2">Centromere</location>
        <location evidence="2">Kinetochore</location>
    </subcellularLocation>
</comment>
<comment type="similarity">
    <text evidence="7">Belongs to the WD repeat RBAP46/RBAP48/MSI1 family.</text>
</comment>